<feature type="chain" id="PRO_0000438891" description="UTP--glucose-1-phosphate uridylyltransferase">
    <location>
        <begin position="1"/>
        <end position="388"/>
    </location>
</feature>
<feature type="binding site" evidence="1 2">
    <location>
        <position position="118"/>
    </location>
    <ligand>
        <name>Mg(2+)</name>
        <dbReference type="ChEBI" id="CHEBI:18420"/>
    </ligand>
</feature>
<feature type="mutagenesis site" description="Two-fold decrease in affinity for UTP. No effect on affinity for Glc-1P and on catalytic activity rate." evidence="3">
    <original>A</original>
    <variation>G</variation>
    <location>
        <position position="8"/>
    </location>
</feature>
<comment type="function">
    <text evidence="3">Catalyzes the formation of UDP-glucose, from UTP and glucose 1-phosphate. Is highly specific since it cannot use other NTPs such as dTTP, CTP, ATP, and GTP, and other sugar-1P such as GlcNAc-1P, Gal-1P, and Man-1P, as substrates. Has probably a central and essential role as the substrate supplier for galactolipid synthesis; galactolipids are major constituents of the photosynthetic thylakoid membrane and important for photosynthetic activity.</text>
</comment>
<comment type="catalytic activity">
    <reaction evidence="2 3">
        <text>alpha-D-glucose 1-phosphate + UTP + H(+) = UDP-alpha-D-glucose + diphosphate</text>
        <dbReference type="Rhea" id="RHEA:19889"/>
        <dbReference type="ChEBI" id="CHEBI:15378"/>
        <dbReference type="ChEBI" id="CHEBI:33019"/>
        <dbReference type="ChEBI" id="CHEBI:46398"/>
        <dbReference type="ChEBI" id="CHEBI:58601"/>
        <dbReference type="ChEBI" id="CHEBI:58885"/>
        <dbReference type="EC" id="2.7.7.9"/>
    </reaction>
</comment>
<comment type="cofactor">
    <cofactor evidence="2 5">
        <name>Mg(2+)</name>
        <dbReference type="ChEBI" id="CHEBI:18420"/>
    </cofactor>
</comment>
<comment type="biophysicochemical properties">
    <kinetics>
        <KM evidence="3">0.18 mM for UTP (at pH 7.5 and 37 degrees Celsius)</KM>
        <KM evidence="3">0.085 mM for alpha-D-glucose 1-phosphate (at pH 7.5 and 37 degrees Celsius)</KM>
        <Vmax evidence="3">0.63 umol/min/mg enzyme (at pH 7.5 and 37 degrees Celsius)</Vmax>
        <text evidence="3">kcat is 28 sec(-1) (at pH 7.5 and 37 degrees Celsius).</text>
    </kinetics>
</comment>
<comment type="disruption phenotype">
    <text evidence="3">Complete disruption of this gene could not be achieved, suggesting that the CugP-type UDP-Glc PPase is essential for growth and survival of Synechocystis.</text>
</comment>
<comment type="miscellaneous">
    <text evidence="5">The CugP-type UDP-Glc PPase appears to be present in all cyanobacteria, whereas the GalU-type UDP-Glc PPase is present in only certain cyanobacterial species. Moreover, the GalU-type PPase is found to be widely distributed throughout the bacterial kingdom, whereas the CugP-type can be found in only very limited species other than cyanobacteria.</text>
</comment>
<comment type="similarity">
    <text evidence="2 5">Belongs to the CugP-type UDP-glucose pyrophosphorylase family.</text>
</comment>
<gene>
    <name evidence="2 4" type="primary">cugP</name>
    <name evidence="6" type="ordered locus">sll1558</name>
</gene>
<name>CUGP_SYNY3</name>
<proteinExistence type="evidence at protein level"/>
<dbReference type="EC" id="2.7.7.9" evidence="2 3"/>
<dbReference type="EMBL" id="BA000022">
    <property type="protein sequence ID" value="BAA18379.1"/>
    <property type="molecule type" value="Genomic_DNA"/>
</dbReference>
<dbReference type="PIR" id="S75920">
    <property type="entry name" value="S75920"/>
</dbReference>
<dbReference type="SMR" id="P74285"/>
<dbReference type="IntAct" id="P74285">
    <property type="interactions" value="2"/>
</dbReference>
<dbReference type="STRING" id="1148.gene:10499255"/>
<dbReference type="PaxDb" id="1148-1653465"/>
<dbReference type="EnsemblBacteria" id="BAA18379">
    <property type="protein sequence ID" value="BAA18379"/>
    <property type="gene ID" value="BAA18379"/>
</dbReference>
<dbReference type="KEGG" id="syn:sll1558"/>
<dbReference type="eggNOG" id="COG1208">
    <property type="taxonomic scope" value="Bacteria"/>
</dbReference>
<dbReference type="InParanoid" id="P74285"/>
<dbReference type="PhylomeDB" id="P74285"/>
<dbReference type="BRENDA" id="2.7.7.9">
    <property type="organism ID" value="382"/>
</dbReference>
<dbReference type="Proteomes" id="UP000001425">
    <property type="component" value="Chromosome"/>
</dbReference>
<dbReference type="GO" id="GO:0005737">
    <property type="term" value="C:cytoplasm"/>
    <property type="evidence" value="ECO:0000318"/>
    <property type="project" value="GO_Central"/>
</dbReference>
<dbReference type="GO" id="GO:0000287">
    <property type="term" value="F:magnesium ion binding"/>
    <property type="evidence" value="ECO:0007669"/>
    <property type="project" value="UniProtKB-UniRule"/>
</dbReference>
<dbReference type="GO" id="GO:0016779">
    <property type="term" value="F:nucleotidyltransferase activity"/>
    <property type="evidence" value="ECO:0000318"/>
    <property type="project" value="GO_Central"/>
</dbReference>
<dbReference type="GO" id="GO:0002134">
    <property type="term" value="F:UTP binding"/>
    <property type="evidence" value="ECO:0000314"/>
    <property type="project" value="UniProtKB"/>
</dbReference>
<dbReference type="GO" id="GO:0003983">
    <property type="term" value="F:UTP:glucose-1-phosphate uridylyltransferase activity"/>
    <property type="evidence" value="ECO:0000314"/>
    <property type="project" value="UniProtKB"/>
</dbReference>
<dbReference type="GO" id="GO:0009058">
    <property type="term" value="P:biosynthetic process"/>
    <property type="evidence" value="ECO:0007669"/>
    <property type="project" value="InterPro"/>
</dbReference>
<dbReference type="GO" id="GO:0006011">
    <property type="term" value="P:UDP-alpha-D-glucose metabolic process"/>
    <property type="evidence" value="ECO:0000314"/>
    <property type="project" value="UniProtKB"/>
</dbReference>
<dbReference type="CDD" id="cd04181">
    <property type="entry name" value="NTP_transferase"/>
    <property type="match status" value="1"/>
</dbReference>
<dbReference type="FunFam" id="3.90.550.10:FF:000013">
    <property type="entry name" value="mannose-1-phosphate guanyltransferase beta"/>
    <property type="match status" value="1"/>
</dbReference>
<dbReference type="Gene3D" id="2.160.10.10">
    <property type="entry name" value="Hexapeptide repeat proteins"/>
    <property type="match status" value="1"/>
</dbReference>
<dbReference type="Gene3D" id="3.90.550.10">
    <property type="entry name" value="Spore Coat Polysaccharide Biosynthesis Protein SpsA, Chain A"/>
    <property type="match status" value="1"/>
</dbReference>
<dbReference type="HAMAP" id="MF_02085">
    <property type="entry name" value="CugP_cyano"/>
    <property type="match status" value="1"/>
</dbReference>
<dbReference type="InterPro" id="IPR037538">
    <property type="entry name" value="CugP_cyano"/>
</dbReference>
<dbReference type="InterPro" id="IPR050486">
    <property type="entry name" value="Mannose-1P_guanyltransferase"/>
</dbReference>
<dbReference type="InterPro" id="IPR005835">
    <property type="entry name" value="NTP_transferase_dom"/>
</dbReference>
<dbReference type="InterPro" id="IPR029044">
    <property type="entry name" value="Nucleotide-diphossugar_trans"/>
</dbReference>
<dbReference type="PANTHER" id="PTHR22572">
    <property type="entry name" value="SUGAR-1-PHOSPHATE GUANYL TRANSFERASE"/>
    <property type="match status" value="1"/>
</dbReference>
<dbReference type="Pfam" id="PF00483">
    <property type="entry name" value="NTP_transferase"/>
    <property type="match status" value="1"/>
</dbReference>
<dbReference type="SUPFAM" id="SSF53448">
    <property type="entry name" value="Nucleotide-diphospho-sugar transferases"/>
    <property type="match status" value="1"/>
</dbReference>
<protein>
    <recommendedName>
        <fullName evidence="2 5">UTP--glucose-1-phosphate uridylyltransferase</fullName>
        <ecNumber evidence="2 3">2.7.7.9</ecNumber>
    </recommendedName>
    <alternativeName>
        <fullName evidence="2 4">Cyanobacterial UDP-glucose pyrophosphorylase</fullName>
    </alternativeName>
    <alternativeName>
        <fullName evidence="2 4">UDP-glucose pyrophosphorylase</fullName>
        <shortName evidence="2 4">UDP-Glc PPase</shortName>
    </alternativeName>
</protein>
<reference key="1">
    <citation type="journal article" date="1996" name="DNA Res.">
        <title>Sequence analysis of the genome of the unicellular cyanobacterium Synechocystis sp. strain PCC6803. II. Sequence determination of the entire genome and assignment of potential protein-coding regions.</title>
        <authorList>
            <person name="Kaneko T."/>
            <person name="Sato S."/>
            <person name="Kotani H."/>
            <person name="Tanaka A."/>
            <person name="Asamizu E."/>
            <person name="Nakamura Y."/>
            <person name="Miyajima N."/>
            <person name="Hirosawa M."/>
            <person name="Sugiura M."/>
            <person name="Sasamoto S."/>
            <person name="Kimura T."/>
            <person name="Hosouchi T."/>
            <person name="Matsuno A."/>
            <person name="Muraki A."/>
            <person name="Nakazaki N."/>
            <person name="Naruo K."/>
            <person name="Okumura S."/>
            <person name="Shimpo S."/>
            <person name="Takeuchi C."/>
            <person name="Wada T."/>
            <person name="Watanabe A."/>
            <person name="Yamada M."/>
            <person name="Yasuda M."/>
            <person name="Tabata S."/>
        </authorList>
    </citation>
    <scope>NUCLEOTIDE SEQUENCE [LARGE SCALE GENOMIC DNA]</scope>
    <source>
        <strain>ATCC 27184 / PCC 6803 / Kazusa</strain>
    </source>
</reference>
<reference key="2">
    <citation type="journal article" date="2014" name="J. Bacteriol.">
        <title>CugP is a novel ubiquitous non-GalU-type bacterial UDP-glucose pyrophosphorylase found in cyanobacteria.</title>
        <authorList>
            <person name="Maeda K."/>
            <person name="Narikawa R."/>
            <person name="Ikeuchi M."/>
        </authorList>
    </citation>
    <scope>FUNCTION</scope>
    <scope>CATALYTIC ACTIVITY</scope>
    <scope>SUBSTRATE SPECIFICITY</scope>
    <scope>COFACTOR</scope>
    <scope>BIOPHYSICOCHEMICAL PROPERTIES</scope>
    <scope>DISRUPTION PHENOTYPE</scope>
    <scope>MUTAGENESIS OF ALA-8</scope>
    <source>
        <strain>ATCC 27184 / PCC 6803 / N-1</strain>
    </source>
</reference>
<accession>P74285</accession>
<organism>
    <name type="scientific">Synechocystis sp. (strain ATCC 27184 / PCC 6803 / Kazusa)</name>
    <dbReference type="NCBI Taxonomy" id="1111708"/>
    <lineage>
        <taxon>Bacteria</taxon>
        <taxon>Bacillati</taxon>
        <taxon>Cyanobacteriota</taxon>
        <taxon>Cyanophyceae</taxon>
        <taxon>Synechococcales</taxon>
        <taxon>Merismopediaceae</taxon>
        <taxon>Synechocystis</taxon>
    </lineage>
</organism>
<sequence length="388" mass="42768">MKAMILAAGKGTRVRPITHTIPKPMIPILQKPVMEFLLELLRQHGFDQIMVNVSHLAEEIESYFRDGQRFGVQIAYSFEGNIVDGDLVGKALGSAGGLKKIQEFNPFFDDTFVVLCGDALIDLDLTTAVKLHREKGAIATIITKTVPQELVSSYGVVVTDDNGKILTFQEKPAVEEALSTEINTGIYIFEPEVIDYIPSGQEYDLGGDLFPKLVDSGLPFYAVNMDFEWVDIGKVPDYWQAIRGVLSREIKNVQIPGIEVRPGVYTGINVAANWDNIEIEGPVYIGGMTRIEDGVKIIGPSMIGPSCLICQGAVVDNSVIFEYSRLGPGARLVDKLVFGRYCVDKTGAAIDVQAAALDWLITDARHAAVQYRQEYPSQREISKLLQPE</sequence>
<keyword id="KW-0460">Magnesium</keyword>
<keyword id="KW-0479">Metal-binding</keyword>
<keyword id="KW-0548">Nucleotidyltransferase</keyword>
<keyword id="KW-1185">Reference proteome</keyword>
<keyword id="KW-0808">Transferase</keyword>
<evidence type="ECO:0000250" key="1">
    <source>
        <dbReference type="UniProtKB" id="Q8Z5I4"/>
    </source>
</evidence>
<evidence type="ECO:0000255" key="2">
    <source>
        <dbReference type="HAMAP-Rule" id="MF_02085"/>
    </source>
</evidence>
<evidence type="ECO:0000269" key="3">
    <source>
    </source>
</evidence>
<evidence type="ECO:0000303" key="4">
    <source>
    </source>
</evidence>
<evidence type="ECO:0000305" key="5">
    <source>
    </source>
</evidence>
<evidence type="ECO:0000312" key="6">
    <source>
        <dbReference type="EMBL" id="BAA18379.1"/>
    </source>
</evidence>